<keyword id="KW-0396">Initiation factor</keyword>
<keyword id="KW-0648">Protein biosynthesis</keyword>
<keyword id="KW-1185">Reference proteome</keyword>
<keyword id="KW-0694">RNA-binding</keyword>
<protein>
    <recommendedName>
        <fullName evidence="1">Translation initiation factor 2 subunit alpha</fullName>
    </recommendedName>
    <alternativeName>
        <fullName evidence="1">aIF2-alpha</fullName>
    </alternativeName>
    <alternativeName>
        <fullName evidence="1">eIF-2-alpha</fullName>
    </alternativeName>
</protein>
<feature type="chain" id="PRO_1000021646" description="Translation initiation factor 2 subunit alpha">
    <location>
        <begin position="1"/>
        <end position="260"/>
    </location>
</feature>
<feature type="domain" description="S1 motif" evidence="1">
    <location>
        <begin position="12"/>
        <end position="83"/>
    </location>
</feature>
<organism>
    <name type="scientific">Methanosphaera stadtmanae (strain ATCC 43021 / DSM 3091 / JCM 11832 / MCB-3)</name>
    <dbReference type="NCBI Taxonomy" id="339860"/>
    <lineage>
        <taxon>Archaea</taxon>
        <taxon>Methanobacteriati</taxon>
        <taxon>Methanobacteriota</taxon>
        <taxon>Methanomada group</taxon>
        <taxon>Methanobacteria</taxon>
        <taxon>Methanobacteriales</taxon>
        <taxon>Methanobacteriaceae</taxon>
        <taxon>Methanosphaera</taxon>
    </lineage>
</organism>
<gene>
    <name evidence="1" type="primary">eif2a</name>
    <name type="ordered locus">Msp_1527</name>
</gene>
<comment type="function">
    <text evidence="1">eIF-2 functions in the early steps of protein synthesis by forming a ternary complex with GTP and initiator tRNA.</text>
</comment>
<comment type="subunit">
    <text evidence="1">Heterotrimer composed of an alpha, a beta and a gamma chain.</text>
</comment>
<comment type="similarity">
    <text evidence="1">Belongs to the eIF-2-alpha family.</text>
</comment>
<name>IF2A_METST</name>
<accession>Q2NE59</accession>
<reference key="1">
    <citation type="journal article" date="2006" name="J. Bacteriol.">
        <title>The genome sequence of Methanosphaera stadtmanae reveals why this human intestinal archaeon is restricted to methanol and H2 for methane formation and ATP synthesis.</title>
        <authorList>
            <person name="Fricke W.F."/>
            <person name="Seedorf H."/>
            <person name="Henne A."/>
            <person name="Kruer M."/>
            <person name="Liesegang H."/>
            <person name="Hedderich R."/>
            <person name="Gottschalk G."/>
            <person name="Thauer R.K."/>
        </authorList>
    </citation>
    <scope>NUCLEOTIDE SEQUENCE [LARGE SCALE GENOMIC DNA]</scope>
    <source>
        <strain>ATCC 43021 / DSM 3091 / JCM 11832 / MCB-3</strain>
    </source>
</reference>
<dbReference type="EMBL" id="CP000102">
    <property type="protein sequence ID" value="ABC57894.1"/>
    <property type="molecule type" value="Genomic_DNA"/>
</dbReference>
<dbReference type="RefSeq" id="WP_011407093.1">
    <property type="nucleotide sequence ID" value="NC_007681.1"/>
</dbReference>
<dbReference type="SMR" id="Q2NE59"/>
<dbReference type="STRING" id="339860.Msp_1527"/>
<dbReference type="KEGG" id="mst:Msp_1527"/>
<dbReference type="eggNOG" id="arCOG04107">
    <property type="taxonomic scope" value="Archaea"/>
</dbReference>
<dbReference type="HOGENOM" id="CLU_033458_0_2_2"/>
<dbReference type="OrthoDB" id="84794at2157"/>
<dbReference type="Proteomes" id="UP000001931">
    <property type="component" value="Chromosome"/>
</dbReference>
<dbReference type="GO" id="GO:0043022">
    <property type="term" value="F:ribosome binding"/>
    <property type="evidence" value="ECO:0007669"/>
    <property type="project" value="TreeGrafter"/>
</dbReference>
<dbReference type="GO" id="GO:0003723">
    <property type="term" value="F:RNA binding"/>
    <property type="evidence" value="ECO:0007669"/>
    <property type="project" value="UniProtKB-UniRule"/>
</dbReference>
<dbReference type="GO" id="GO:0003743">
    <property type="term" value="F:translation initiation factor activity"/>
    <property type="evidence" value="ECO:0007669"/>
    <property type="project" value="UniProtKB-UniRule"/>
</dbReference>
<dbReference type="CDD" id="cd04452">
    <property type="entry name" value="S1_IF2_alpha"/>
    <property type="match status" value="1"/>
</dbReference>
<dbReference type="FunFam" id="2.40.50.140:FF:000015">
    <property type="entry name" value="Eukaryotic translation initiation factor 2 subunit alpha"/>
    <property type="match status" value="1"/>
</dbReference>
<dbReference type="Gene3D" id="3.30.70.1130">
    <property type="entry name" value="EIF_2_alpha"/>
    <property type="match status" value="1"/>
</dbReference>
<dbReference type="Gene3D" id="2.40.50.140">
    <property type="entry name" value="Nucleic acid-binding proteins"/>
    <property type="match status" value="1"/>
</dbReference>
<dbReference type="Gene3D" id="1.10.150.190">
    <property type="entry name" value="Translation initiation factor 2, subunit 1, domain 2"/>
    <property type="match status" value="1"/>
</dbReference>
<dbReference type="HAMAP" id="MF_00231">
    <property type="entry name" value="eIF_2_alpha"/>
    <property type="match status" value="1"/>
</dbReference>
<dbReference type="InterPro" id="IPR012340">
    <property type="entry name" value="NA-bd_OB-fold"/>
</dbReference>
<dbReference type="InterPro" id="IPR003029">
    <property type="entry name" value="S1_domain"/>
</dbReference>
<dbReference type="InterPro" id="IPR044126">
    <property type="entry name" value="S1_IF2_alpha"/>
</dbReference>
<dbReference type="InterPro" id="IPR022964">
    <property type="entry name" value="TIF2_asu_arc"/>
</dbReference>
<dbReference type="InterPro" id="IPR024055">
    <property type="entry name" value="TIF2_asu_C"/>
</dbReference>
<dbReference type="InterPro" id="IPR024054">
    <property type="entry name" value="TIF2_asu_middle_sf"/>
</dbReference>
<dbReference type="InterPro" id="IPR011488">
    <property type="entry name" value="TIF_2_asu"/>
</dbReference>
<dbReference type="NCBIfam" id="NF003062">
    <property type="entry name" value="PRK03987.1-1"/>
    <property type="match status" value="1"/>
</dbReference>
<dbReference type="NCBIfam" id="NF003064">
    <property type="entry name" value="PRK03987.1-4"/>
    <property type="match status" value="1"/>
</dbReference>
<dbReference type="PANTHER" id="PTHR10602">
    <property type="entry name" value="EUKARYOTIC TRANSLATION INITIATION FACTOR 2 SUBUNIT 1"/>
    <property type="match status" value="1"/>
</dbReference>
<dbReference type="PANTHER" id="PTHR10602:SF0">
    <property type="entry name" value="EUKARYOTIC TRANSLATION INITIATION FACTOR 2 SUBUNIT 1"/>
    <property type="match status" value="1"/>
</dbReference>
<dbReference type="Pfam" id="PF07541">
    <property type="entry name" value="EIF_2_alpha"/>
    <property type="match status" value="1"/>
</dbReference>
<dbReference type="Pfam" id="PF00575">
    <property type="entry name" value="S1"/>
    <property type="match status" value="1"/>
</dbReference>
<dbReference type="SMART" id="SM00316">
    <property type="entry name" value="S1"/>
    <property type="match status" value="1"/>
</dbReference>
<dbReference type="SUPFAM" id="SSF110993">
    <property type="entry name" value="eIF-2-alpha, C-terminal domain"/>
    <property type="match status" value="1"/>
</dbReference>
<dbReference type="SUPFAM" id="SSF116742">
    <property type="entry name" value="eIF2alpha middle domain-like"/>
    <property type="match status" value="1"/>
</dbReference>
<dbReference type="SUPFAM" id="SSF50249">
    <property type="entry name" value="Nucleic acid-binding proteins"/>
    <property type="match status" value="1"/>
</dbReference>
<dbReference type="PROSITE" id="PS50126">
    <property type="entry name" value="S1"/>
    <property type="match status" value="1"/>
</dbReference>
<sequence>MVRMSKEWPEEGDLIVGTVHKVLGYGAFAKLEEYEGKEAFIHISEVSSGWVKNIRDYVRENQKIVARVLRVNPKKGHVDASLKRIREDQRTRRMQQWKIEQKAEKLLEISAKSINKTLDEAYDEVGYLIMEEFGDLYEGFELASDDGENVLLDVDVSPEWAKIITEVAKKNISTPEVQITGYVDLTSYKSNGVEIIIEALQSIESDNVEVQCVGSPTYRIMVTTEDYPTAEKILSEAANKCIGIVEENDGEGSFHRELED</sequence>
<evidence type="ECO:0000255" key="1">
    <source>
        <dbReference type="HAMAP-Rule" id="MF_00231"/>
    </source>
</evidence>
<proteinExistence type="inferred from homology"/>